<gene>
    <name evidence="1" type="primary">rplW</name>
    <name type="ordered locus">RALTA_A2942</name>
</gene>
<evidence type="ECO:0000255" key="1">
    <source>
        <dbReference type="HAMAP-Rule" id="MF_01369"/>
    </source>
</evidence>
<evidence type="ECO:0000305" key="2"/>
<dbReference type="EMBL" id="CU633749">
    <property type="protein sequence ID" value="CAQ70866.1"/>
    <property type="molecule type" value="Genomic_DNA"/>
</dbReference>
<dbReference type="RefSeq" id="WP_006576245.1">
    <property type="nucleotide sequence ID" value="NC_010528.1"/>
</dbReference>
<dbReference type="SMR" id="B3R7S1"/>
<dbReference type="GeneID" id="70686816"/>
<dbReference type="KEGG" id="cti:RALTA_A2942"/>
<dbReference type="eggNOG" id="COG0089">
    <property type="taxonomic scope" value="Bacteria"/>
</dbReference>
<dbReference type="HOGENOM" id="CLU_037562_3_1_4"/>
<dbReference type="BioCyc" id="CTAI977880:RALTA_RS14345-MONOMER"/>
<dbReference type="Proteomes" id="UP000001692">
    <property type="component" value="Chromosome 1"/>
</dbReference>
<dbReference type="GO" id="GO:1990904">
    <property type="term" value="C:ribonucleoprotein complex"/>
    <property type="evidence" value="ECO:0007669"/>
    <property type="project" value="UniProtKB-KW"/>
</dbReference>
<dbReference type="GO" id="GO:0005840">
    <property type="term" value="C:ribosome"/>
    <property type="evidence" value="ECO:0007669"/>
    <property type="project" value="UniProtKB-KW"/>
</dbReference>
<dbReference type="GO" id="GO:0019843">
    <property type="term" value="F:rRNA binding"/>
    <property type="evidence" value="ECO:0007669"/>
    <property type="project" value="UniProtKB-UniRule"/>
</dbReference>
<dbReference type="GO" id="GO:0003735">
    <property type="term" value="F:structural constituent of ribosome"/>
    <property type="evidence" value="ECO:0007669"/>
    <property type="project" value="InterPro"/>
</dbReference>
<dbReference type="GO" id="GO:0006412">
    <property type="term" value="P:translation"/>
    <property type="evidence" value="ECO:0007669"/>
    <property type="project" value="UniProtKB-UniRule"/>
</dbReference>
<dbReference type="FunFam" id="3.30.70.330:FF:000001">
    <property type="entry name" value="50S ribosomal protein L23"/>
    <property type="match status" value="1"/>
</dbReference>
<dbReference type="Gene3D" id="3.30.70.330">
    <property type="match status" value="1"/>
</dbReference>
<dbReference type="HAMAP" id="MF_01369_B">
    <property type="entry name" value="Ribosomal_uL23_B"/>
    <property type="match status" value="1"/>
</dbReference>
<dbReference type="InterPro" id="IPR012677">
    <property type="entry name" value="Nucleotide-bd_a/b_plait_sf"/>
</dbReference>
<dbReference type="InterPro" id="IPR013025">
    <property type="entry name" value="Ribosomal_uL23-like"/>
</dbReference>
<dbReference type="InterPro" id="IPR012678">
    <property type="entry name" value="Ribosomal_uL23/eL15/eS24_sf"/>
</dbReference>
<dbReference type="NCBIfam" id="NF004359">
    <property type="entry name" value="PRK05738.1-3"/>
    <property type="match status" value="1"/>
</dbReference>
<dbReference type="NCBIfam" id="NF004363">
    <property type="entry name" value="PRK05738.2-4"/>
    <property type="match status" value="1"/>
</dbReference>
<dbReference type="PANTHER" id="PTHR11620">
    <property type="entry name" value="60S RIBOSOMAL PROTEIN L23A"/>
    <property type="match status" value="1"/>
</dbReference>
<dbReference type="Pfam" id="PF00276">
    <property type="entry name" value="Ribosomal_L23"/>
    <property type="match status" value="1"/>
</dbReference>
<dbReference type="SUPFAM" id="SSF54189">
    <property type="entry name" value="Ribosomal proteins S24e, L23 and L15e"/>
    <property type="match status" value="1"/>
</dbReference>
<proteinExistence type="inferred from homology"/>
<name>RL23_CUPTR</name>
<protein>
    <recommendedName>
        <fullName evidence="1">Large ribosomal subunit protein uL23</fullName>
    </recommendedName>
    <alternativeName>
        <fullName evidence="2">50S ribosomal protein L23</fullName>
    </alternativeName>
</protein>
<reference key="1">
    <citation type="journal article" date="2008" name="Genome Res.">
        <title>Genome sequence of the beta-rhizobium Cupriavidus taiwanensis and comparative genomics of rhizobia.</title>
        <authorList>
            <person name="Amadou C."/>
            <person name="Pascal G."/>
            <person name="Mangenot S."/>
            <person name="Glew M."/>
            <person name="Bontemps C."/>
            <person name="Capela D."/>
            <person name="Carrere S."/>
            <person name="Cruveiller S."/>
            <person name="Dossat C."/>
            <person name="Lajus A."/>
            <person name="Marchetti M."/>
            <person name="Poinsot V."/>
            <person name="Rouy Z."/>
            <person name="Servin B."/>
            <person name="Saad M."/>
            <person name="Schenowitz C."/>
            <person name="Barbe V."/>
            <person name="Batut J."/>
            <person name="Medigue C."/>
            <person name="Masson-Boivin C."/>
        </authorList>
    </citation>
    <scope>NUCLEOTIDE SEQUENCE [LARGE SCALE GENOMIC DNA]</scope>
    <source>
        <strain>DSM 17343 / BCRC 17206 / CCUG 44338 / CIP 107171 / LMG 19424 / R1</strain>
    </source>
</reference>
<accession>B3R7S1</accession>
<comment type="function">
    <text evidence="1">One of the early assembly proteins it binds 23S rRNA. One of the proteins that surrounds the polypeptide exit tunnel on the outside of the ribosome. Forms the main docking site for trigger factor binding to the ribosome.</text>
</comment>
<comment type="subunit">
    <text evidence="1">Part of the 50S ribosomal subunit. Contacts protein L29, and trigger factor when it is bound to the ribosome.</text>
</comment>
<comment type="similarity">
    <text evidence="1">Belongs to the universal ribosomal protein uL23 family.</text>
</comment>
<keyword id="KW-0687">Ribonucleoprotein</keyword>
<keyword id="KW-0689">Ribosomal protein</keyword>
<keyword id="KW-0694">RNA-binding</keyword>
<keyword id="KW-0699">rRNA-binding</keyword>
<organism>
    <name type="scientific">Cupriavidus taiwanensis (strain DSM 17343 / BCRC 17206 / CCUG 44338 / CIP 107171 / LMG 19424 / R1)</name>
    <name type="common">Ralstonia taiwanensis (strain LMG 19424)</name>
    <dbReference type="NCBI Taxonomy" id="977880"/>
    <lineage>
        <taxon>Bacteria</taxon>
        <taxon>Pseudomonadati</taxon>
        <taxon>Pseudomonadota</taxon>
        <taxon>Betaproteobacteria</taxon>
        <taxon>Burkholderiales</taxon>
        <taxon>Burkholderiaceae</taxon>
        <taxon>Cupriavidus</taxon>
    </lineage>
</organism>
<sequence>MTQVAKNDHRLMQVLLAPVVSEKATLVADKNEQVVFEVARDANKAEVKAAVELLFKVEVQSVQILNQKGKQKRFGRFMGRRNHVKKAYVSLKPGQEINFEAEAK</sequence>
<feature type="chain" id="PRO_1000144560" description="Large ribosomal subunit protein uL23">
    <location>
        <begin position="1"/>
        <end position="104"/>
    </location>
</feature>